<protein>
    <recommendedName>
        <fullName evidence="1">Malate dehydrogenase</fullName>
        <ecNumber evidence="1">1.1.1.37</ecNumber>
    </recommendedName>
</protein>
<organism>
    <name type="scientific">Chloroflexus aurantiacus (strain ATCC 29364 / DSM 637 / Y-400-fl)</name>
    <dbReference type="NCBI Taxonomy" id="480224"/>
    <lineage>
        <taxon>Bacteria</taxon>
        <taxon>Bacillati</taxon>
        <taxon>Chloroflexota</taxon>
        <taxon>Chloroflexia</taxon>
        <taxon>Chloroflexales</taxon>
        <taxon>Chloroflexineae</taxon>
        <taxon>Chloroflexaceae</taxon>
        <taxon>Chloroflexus</taxon>
    </lineage>
</organism>
<reference key="1">
    <citation type="submission" date="2009-01" db="EMBL/GenBank/DDBJ databases">
        <title>Complete sequence of Chloroflexus sp. Y-400-fl.</title>
        <authorList>
            <consortium name="US DOE Joint Genome Institute"/>
            <person name="Lucas S."/>
            <person name="Copeland A."/>
            <person name="Lapidus A."/>
            <person name="Glavina del Rio T."/>
            <person name="Dalin E."/>
            <person name="Tice H."/>
            <person name="Bruce D."/>
            <person name="Goodwin L."/>
            <person name="Pitluck S."/>
            <person name="Sims D."/>
            <person name="Kiss H."/>
            <person name="Brettin T."/>
            <person name="Detter J.C."/>
            <person name="Han C."/>
            <person name="Larimer F."/>
            <person name="Land M."/>
            <person name="Hauser L."/>
            <person name="Kyrpides N."/>
            <person name="Ovchinnikova G."/>
            <person name="Bryant D.A."/>
            <person name="Richardson P."/>
        </authorList>
    </citation>
    <scope>NUCLEOTIDE SEQUENCE [LARGE SCALE GENOMIC DNA]</scope>
    <source>
        <strain>ATCC 29364 / DSM 637 / Y-400-fl</strain>
    </source>
</reference>
<accession>B9LLP6</accession>
<dbReference type="EC" id="1.1.1.37" evidence="1"/>
<dbReference type="EMBL" id="CP001364">
    <property type="protein sequence ID" value="ACM52402.1"/>
    <property type="molecule type" value="Genomic_DNA"/>
</dbReference>
<dbReference type="SMR" id="B9LLP6"/>
<dbReference type="KEGG" id="chl:Chy400_0980"/>
<dbReference type="HOGENOM" id="CLU_045401_2_1_0"/>
<dbReference type="OrthoDB" id="9802969at2"/>
<dbReference type="EvolutionaryTrace" id="B9LLP6"/>
<dbReference type="GO" id="GO:0004459">
    <property type="term" value="F:L-lactate dehydrogenase activity"/>
    <property type="evidence" value="ECO:0007669"/>
    <property type="project" value="TreeGrafter"/>
</dbReference>
<dbReference type="GO" id="GO:0030060">
    <property type="term" value="F:L-malate dehydrogenase (NAD+) activity"/>
    <property type="evidence" value="ECO:0007669"/>
    <property type="project" value="UniProtKB-UniRule"/>
</dbReference>
<dbReference type="GO" id="GO:0006089">
    <property type="term" value="P:lactate metabolic process"/>
    <property type="evidence" value="ECO:0007669"/>
    <property type="project" value="TreeGrafter"/>
</dbReference>
<dbReference type="GO" id="GO:0006099">
    <property type="term" value="P:tricarboxylic acid cycle"/>
    <property type="evidence" value="ECO:0007669"/>
    <property type="project" value="UniProtKB-UniRule"/>
</dbReference>
<dbReference type="CDD" id="cd01339">
    <property type="entry name" value="LDH-like_MDH"/>
    <property type="match status" value="1"/>
</dbReference>
<dbReference type="FunFam" id="3.40.50.720:FF:000018">
    <property type="entry name" value="Malate dehydrogenase"/>
    <property type="match status" value="1"/>
</dbReference>
<dbReference type="FunFam" id="3.90.110.10:FF:000004">
    <property type="entry name" value="Malate dehydrogenase"/>
    <property type="match status" value="1"/>
</dbReference>
<dbReference type="Gene3D" id="3.90.110.10">
    <property type="entry name" value="Lactate dehydrogenase/glycoside hydrolase, family 4, C-terminal"/>
    <property type="match status" value="1"/>
</dbReference>
<dbReference type="Gene3D" id="3.40.50.720">
    <property type="entry name" value="NAD(P)-binding Rossmann-like Domain"/>
    <property type="match status" value="1"/>
</dbReference>
<dbReference type="HAMAP" id="MF_00487">
    <property type="entry name" value="Malate_dehydrog_3"/>
    <property type="match status" value="1"/>
</dbReference>
<dbReference type="InterPro" id="IPR001557">
    <property type="entry name" value="L-lactate/malate_DH"/>
</dbReference>
<dbReference type="InterPro" id="IPR022383">
    <property type="entry name" value="Lactate/malate_DH_C"/>
</dbReference>
<dbReference type="InterPro" id="IPR001236">
    <property type="entry name" value="Lactate/malate_DH_N"/>
</dbReference>
<dbReference type="InterPro" id="IPR015955">
    <property type="entry name" value="Lactate_DH/Glyco_Ohase_4_C"/>
</dbReference>
<dbReference type="InterPro" id="IPR011275">
    <property type="entry name" value="Malate_DH_type3"/>
</dbReference>
<dbReference type="InterPro" id="IPR036291">
    <property type="entry name" value="NAD(P)-bd_dom_sf"/>
</dbReference>
<dbReference type="NCBIfam" id="TIGR01763">
    <property type="entry name" value="MalateDH_bact"/>
    <property type="match status" value="1"/>
</dbReference>
<dbReference type="NCBIfam" id="NF004863">
    <property type="entry name" value="PRK06223.1"/>
    <property type="match status" value="1"/>
</dbReference>
<dbReference type="PANTHER" id="PTHR43128">
    <property type="entry name" value="L-2-HYDROXYCARBOXYLATE DEHYDROGENASE (NAD(P)(+))"/>
    <property type="match status" value="1"/>
</dbReference>
<dbReference type="PANTHER" id="PTHR43128:SF16">
    <property type="entry name" value="L-LACTATE DEHYDROGENASE"/>
    <property type="match status" value="1"/>
</dbReference>
<dbReference type="Pfam" id="PF02866">
    <property type="entry name" value="Ldh_1_C"/>
    <property type="match status" value="1"/>
</dbReference>
<dbReference type="Pfam" id="PF00056">
    <property type="entry name" value="Ldh_1_N"/>
    <property type="match status" value="1"/>
</dbReference>
<dbReference type="PIRSF" id="PIRSF000102">
    <property type="entry name" value="Lac_mal_DH"/>
    <property type="match status" value="1"/>
</dbReference>
<dbReference type="PRINTS" id="PR00086">
    <property type="entry name" value="LLDHDRGNASE"/>
</dbReference>
<dbReference type="SUPFAM" id="SSF56327">
    <property type="entry name" value="LDH C-terminal domain-like"/>
    <property type="match status" value="1"/>
</dbReference>
<dbReference type="SUPFAM" id="SSF51735">
    <property type="entry name" value="NAD(P)-binding Rossmann-fold domains"/>
    <property type="match status" value="1"/>
</dbReference>
<keyword id="KW-0520">NAD</keyword>
<keyword id="KW-0560">Oxidoreductase</keyword>
<keyword id="KW-0816">Tricarboxylic acid cycle</keyword>
<comment type="function">
    <text evidence="1">Catalyzes the reversible oxidation of malate to oxaloacetate.</text>
</comment>
<comment type="catalytic activity">
    <reaction evidence="1">
        <text>(S)-malate + NAD(+) = oxaloacetate + NADH + H(+)</text>
        <dbReference type="Rhea" id="RHEA:21432"/>
        <dbReference type="ChEBI" id="CHEBI:15378"/>
        <dbReference type="ChEBI" id="CHEBI:15589"/>
        <dbReference type="ChEBI" id="CHEBI:16452"/>
        <dbReference type="ChEBI" id="CHEBI:57540"/>
        <dbReference type="ChEBI" id="CHEBI:57945"/>
        <dbReference type="EC" id="1.1.1.37"/>
    </reaction>
</comment>
<comment type="similarity">
    <text evidence="1">Belongs to the LDH/MDH superfamily. MDH type 3 family.</text>
</comment>
<name>MDH_CHLSY</name>
<sequence>MRKKISIIGAGFVGSTTAHWLAAKELGDIVLLDIVEGVPQGKALDLYEASPIEGFDVRVTGTNNYADTANSDVIVVTSGAPRKPGMSREDLIKVNADITRACISQAAPLSPNAVIIMVNNPLDAMTYLAAEVSGFPKERVIGQAGVLDAARYRTFIAMEAGVSVEDVQAMLMGGHGDEMVPLPRFSTISGIPVSEFIAPDRLAQIVERTRKGGGEIVNLLKTGSAYYAPAAATAQMVEAVLKDKKRVMPVAAYLTGQYGLNDIYFGVPVILGAGGVEKILELPLNEEEMALLNASAKAVRATLDTLKSL</sequence>
<proteinExistence type="inferred from homology"/>
<evidence type="ECO:0000255" key="1">
    <source>
        <dbReference type="HAMAP-Rule" id="MF_00487"/>
    </source>
</evidence>
<gene>
    <name evidence="1" type="primary">mdh</name>
    <name type="ordered locus">Chy400_0980</name>
</gene>
<feature type="chain" id="PRO_1000191647" description="Malate dehydrogenase">
    <location>
        <begin position="1"/>
        <end position="309"/>
    </location>
</feature>
<feature type="active site" description="Proton acceptor" evidence="1">
    <location>
        <position position="175"/>
    </location>
</feature>
<feature type="binding site" evidence="1">
    <location>
        <begin position="9"/>
        <end position="14"/>
    </location>
    <ligand>
        <name>NAD(+)</name>
        <dbReference type="ChEBI" id="CHEBI:57540"/>
    </ligand>
</feature>
<feature type="binding site" evidence="1">
    <location>
        <position position="33"/>
    </location>
    <ligand>
        <name>NAD(+)</name>
        <dbReference type="ChEBI" id="CHEBI:57540"/>
    </ligand>
</feature>
<feature type="binding site" evidence="1">
    <location>
        <position position="82"/>
    </location>
    <ligand>
        <name>substrate</name>
    </ligand>
</feature>
<feature type="binding site" evidence="1">
    <location>
        <position position="88"/>
    </location>
    <ligand>
        <name>substrate</name>
    </ligand>
</feature>
<feature type="binding site" evidence="1">
    <location>
        <position position="95"/>
    </location>
    <ligand>
        <name>NAD(+)</name>
        <dbReference type="ChEBI" id="CHEBI:57540"/>
    </ligand>
</feature>
<feature type="binding site" evidence="1">
    <location>
        <begin position="118"/>
        <end position="120"/>
    </location>
    <ligand>
        <name>NAD(+)</name>
        <dbReference type="ChEBI" id="CHEBI:57540"/>
    </ligand>
</feature>
<feature type="binding site" evidence="1">
    <location>
        <position position="120"/>
    </location>
    <ligand>
        <name>substrate</name>
    </ligand>
</feature>
<feature type="binding site" evidence="1">
    <location>
        <position position="151"/>
    </location>
    <ligand>
        <name>substrate</name>
    </ligand>
</feature>